<feature type="chain" id="PRO_0000287015" description="Cyclin-B2-4">
    <location>
        <begin position="1"/>
        <end position="431"/>
    </location>
</feature>
<feature type="region of interest" description="Disordered" evidence="1">
    <location>
        <begin position="1"/>
        <end position="30"/>
    </location>
</feature>
<reference key="1">
    <citation type="journal article" date="2000" name="Nature">
        <title>Sequence and analysis of chromosome 1 of the plant Arabidopsis thaliana.</title>
        <authorList>
            <person name="Theologis A."/>
            <person name="Ecker J.R."/>
            <person name="Palm C.J."/>
            <person name="Federspiel N.A."/>
            <person name="Kaul S."/>
            <person name="White O."/>
            <person name="Alonso J."/>
            <person name="Altafi H."/>
            <person name="Araujo R."/>
            <person name="Bowman C.L."/>
            <person name="Brooks S.Y."/>
            <person name="Buehler E."/>
            <person name="Chan A."/>
            <person name="Chao Q."/>
            <person name="Chen H."/>
            <person name="Cheuk R.F."/>
            <person name="Chin C.W."/>
            <person name="Chung M.K."/>
            <person name="Conn L."/>
            <person name="Conway A.B."/>
            <person name="Conway A.R."/>
            <person name="Creasy T.H."/>
            <person name="Dewar K."/>
            <person name="Dunn P."/>
            <person name="Etgu P."/>
            <person name="Feldblyum T.V."/>
            <person name="Feng J.-D."/>
            <person name="Fong B."/>
            <person name="Fujii C.Y."/>
            <person name="Gill J.E."/>
            <person name="Goldsmith A.D."/>
            <person name="Haas B."/>
            <person name="Hansen N.F."/>
            <person name="Hughes B."/>
            <person name="Huizar L."/>
            <person name="Hunter J.L."/>
            <person name="Jenkins J."/>
            <person name="Johnson-Hopson C."/>
            <person name="Khan S."/>
            <person name="Khaykin E."/>
            <person name="Kim C.J."/>
            <person name="Koo H.L."/>
            <person name="Kremenetskaia I."/>
            <person name="Kurtz D.B."/>
            <person name="Kwan A."/>
            <person name="Lam B."/>
            <person name="Langin-Hooper S."/>
            <person name="Lee A."/>
            <person name="Lee J.M."/>
            <person name="Lenz C.A."/>
            <person name="Li J.H."/>
            <person name="Li Y.-P."/>
            <person name="Lin X."/>
            <person name="Liu S.X."/>
            <person name="Liu Z.A."/>
            <person name="Luros J.S."/>
            <person name="Maiti R."/>
            <person name="Marziali A."/>
            <person name="Militscher J."/>
            <person name="Miranda M."/>
            <person name="Nguyen M."/>
            <person name="Nierman W.C."/>
            <person name="Osborne B.I."/>
            <person name="Pai G."/>
            <person name="Peterson J."/>
            <person name="Pham P.K."/>
            <person name="Rizzo M."/>
            <person name="Rooney T."/>
            <person name="Rowley D."/>
            <person name="Sakano H."/>
            <person name="Salzberg S.L."/>
            <person name="Schwartz J.R."/>
            <person name="Shinn P."/>
            <person name="Southwick A.M."/>
            <person name="Sun H."/>
            <person name="Tallon L.J."/>
            <person name="Tambunga G."/>
            <person name="Toriumi M.J."/>
            <person name="Town C.D."/>
            <person name="Utterback T."/>
            <person name="Van Aken S."/>
            <person name="Vaysberg M."/>
            <person name="Vysotskaia V.S."/>
            <person name="Walker M."/>
            <person name="Wu D."/>
            <person name="Yu G."/>
            <person name="Fraser C.M."/>
            <person name="Venter J.C."/>
            <person name="Davis R.W."/>
        </authorList>
    </citation>
    <scope>NUCLEOTIDE SEQUENCE [LARGE SCALE GENOMIC DNA]</scope>
    <source>
        <strain>cv. Columbia</strain>
    </source>
</reference>
<reference key="2">
    <citation type="journal article" date="2017" name="Plant J.">
        <title>Araport11: a complete reannotation of the Arabidopsis thaliana reference genome.</title>
        <authorList>
            <person name="Cheng C.Y."/>
            <person name="Krishnakumar V."/>
            <person name="Chan A.P."/>
            <person name="Thibaud-Nissen F."/>
            <person name="Schobel S."/>
            <person name="Town C.D."/>
        </authorList>
    </citation>
    <scope>GENOME REANNOTATION</scope>
    <source>
        <strain>cv. Columbia</strain>
    </source>
</reference>
<reference key="3">
    <citation type="journal article" date="2004" name="Plant Physiol.">
        <title>Genome-wide analysis of the cyclin family in Arabidopsis and comparative phylogenetic analysis of plant cyclin-like proteins.</title>
        <authorList>
            <person name="Wang G."/>
            <person name="Kong H."/>
            <person name="Sun Y."/>
            <person name="Zhang X."/>
            <person name="Zhang W."/>
            <person name="Altman N."/>
            <person name="dePamphilis C.W."/>
            <person name="Ma H."/>
        </authorList>
    </citation>
    <scope>GENE FAMILY</scope>
    <scope>NOMENCLATURE</scope>
</reference>
<reference key="4">
    <citation type="journal article" date="2010" name="Mol. Syst. Biol.">
        <title>Targeted interactomics reveals a complex core cell cycle machinery in Arabidopsis thaliana.</title>
        <authorList>
            <person name="Van Leene J."/>
            <person name="Hollunder J."/>
            <person name="Eeckhout D."/>
            <person name="Persiau G."/>
            <person name="Van De Slijke E."/>
            <person name="Stals H."/>
            <person name="Van Isterdael G."/>
            <person name="Verkest A."/>
            <person name="Neirynck S."/>
            <person name="Buffel Y."/>
            <person name="De Bodt S."/>
            <person name="Maere S."/>
            <person name="Laukens K."/>
            <person name="Pharazyn A."/>
            <person name="Ferreira P.C.G."/>
            <person name="Eloy N."/>
            <person name="Renne C."/>
            <person name="Meyer C."/>
            <person name="Faure J.-D."/>
            <person name="Steinbrenner J."/>
            <person name="Beynon J."/>
            <person name="Larkin J.C."/>
            <person name="Van de Peer Y."/>
            <person name="Hilson P."/>
            <person name="Kuiper M."/>
            <person name="De Veylder L."/>
            <person name="Van Onckelen H."/>
            <person name="Inze D."/>
            <person name="Witters E."/>
            <person name="De Jaeger G."/>
        </authorList>
    </citation>
    <scope>INTERACTION WITH SMR11</scope>
</reference>
<organism>
    <name type="scientific">Arabidopsis thaliana</name>
    <name type="common">Mouse-ear cress</name>
    <dbReference type="NCBI Taxonomy" id="3702"/>
    <lineage>
        <taxon>Eukaryota</taxon>
        <taxon>Viridiplantae</taxon>
        <taxon>Streptophyta</taxon>
        <taxon>Embryophyta</taxon>
        <taxon>Tracheophyta</taxon>
        <taxon>Spermatophyta</taxon>
        <taxon>Magnoliopsida</taxon>
        <taxon>eudicotyledons</taxon>
        <taxon>Gunneridae</taxon>
        <taxon>Pentapetalae</taxon>
        <taxon>rosids</taxon>
        <taxon>malvids</taxon>
        <taxon>Brassicales</taxon>
        <taxon>Brassicaceae</taxon>
        <taxon>Camelineae</taxon>
        <taxon>Arabidopsis</taxon>
    </lineage>
</organism>
<name>CCB24_ARATH</name>
<protein>
    <recommendedName>
        <fullName>Cyclin-B2-4</fullName>
    </recommendedName>
    <alternativeName>
        <fullName>G2/mitotic-specific cyclin-B2-4</fullName>
        <shortName>CycB2;4</shortName>
    </alternativeName>
</protein>
<evidence type="ECO:0000256" key="1">
    <source>
        <dbReference type="SAM" id="MobiDB-lite"/>
    </source>
</evidence>
<evidence type="ECO:0000269" key="2">
    <source>
    </source>
</evidence>
<evidence type="ECO:0000305" key="3"/>
<sequence length="431" mass="49241">MGGSDENRHGVIGPMNRQQGGLRGGKVIPTNGQTRRALSNINKNIIGAPVYPCAVKRPFTEKNGICNKKIPPVPVHRPVTRKFAAQLAENNLQIHKEETKKPDLISNEALDRIITDVEEGDFNEPMFVQHTEAMLEEIDKMEGIEMQDSNDIDAEVEESVMDIDSCDKNNPLSVVEYINDIYCFYKKNECRSCVPPNYMENQHDINERMRGILFDWLIEVHYKFELMEETLYLTINLIDRFLAVHQHIARKKLQLVGVTAMLLACKYEEVSVPVVDDLILISDKAYTRTEILDMEKLMANTLQFNFCLPTPYVFMRRFLKAAQSDKKLELLSFFMIELCLVEYEMLQYTPSQLAASAIYTAQSTLKGYEDWSKTSEFHSGYTEEALLECSRKMVGLHHKAGTGKLTGVHRKYNTSKFGYAARIEPAGFLLL</sequence>
<dbReference type="EMBL" id="AC009978">
    <property type="protein sequence ID" value="AAF17635.1"/>
    <property type="status" value="ALT_SEQ"/>
    <property type="molecule type" value="Genomic_DNA"/>
</dbReference>
<dbReference type="EMBL" id="AC012394">
    <property type="protein sequence ID" value="AAF16669.1"/>
    <property type="status" value="ALT_SEQ"/>
    <property type="molecule type" value="Genomic_DNA"/>
</dbReference>
<dbReference type="EMBL" id="CP002684">
    <property type="protein sequence ID" value="AEE35823.1"/>
    <property type="molecule type" value="Genomic_DNA"/>
</dbReference>
<dbReference type="PIR" id="F96790">
    <property type="entry name" value="F96790"/>
</dbReference>
<dbReference type="RefSeq" id="NP_177758.2">
    <property type="nucleotide sequence ID" value="NM_106281.6"/>
</dbReference>
<dbReference type="SMR" id="Q9SFW6"/>
<dbReference type="BioGRID" id="29183">
    <property type="interactions" value="5"/>
</dbReference>
<dbReference type="FunCoup" id="Q9SFW6">
    <property type="interactions" value="1603"/>
</dbReference>
<dbReference type="IntAct" id="Q9SFW6">
    <property type="interactions" value="13"/>
</dbReference>
<dbReference type="STRING" id="3702.Q9SFW6"/>
<dbReference type="iPTMnet" id="Q9SFW6"/>
<dbReference type="PaxDb" id="3702-AT1G76310.1"/>
<dbReference type="EnsemblPlants" id="AT1G76310.1">
    <property type="protein sequence ID" value="AT1G76310.1"/>
    <property type="gene ID" value="AT1G76310"/>
</dbReference>
<dbReference type="GeneID" id="843964"/>
<dbReference type="Gramene" id="AT1G76310.1">
    <property type="protein sequence ID" value="AT1G76310.1"/>
    <property type="gene ID" value="AT1G76310"/>
</dbReference>
<dbReference type="KEGG" id="ath:AT1G76310"/>
<dbReference type="Araport" id="AT1G76310"/>
<dbReference type="TAIR" id="AT1G76310">
    <property type="gene designation" value="CYCB2"/>
</dbReference>
<dbReference type="eggNOG" id="KOG0653">
    <property type="taxonomic scope" value="Eukaryota"/>
</dbReference>
<dbReference type="HOGENOM" id="CLU_020695_0_0_1"/>
<dbReference type="InParanoid" id="Q9SFW6"/>
<dbReference type="PhylomeDB" id="Q9SFW6"/>
<dbReference type="PRO" id="PR:Q9SFW6"/>
<dbReference type="Proteomes" id="UP000006548">
    <property type="component" value="Chromosome 1"/>
</dbReference>
<dbReference type="ExpressionAtlas" id="Q9SFW6">
    <property type="expression patterns" value="baseline and differential"/>
</dbReference>
<dbReference type="GO" id="GO:0016538">
    <property type="term" value="F:cyclin-dependent protein serine/threonine kinase regulator activity"/>
    <property type="evidence" value="ECO:0007669"/>
    <property type="project" value="InterPro"/>
</dbReference>
<dbReference type="GO" id="GO:0051301">
    <property type="term" value="P:cell division"/>
    <property type="evidence" value="ECO:0007669"/>
    <property type="project" value="UniProtKB-KW"/>
</dbReference>
<dbReference type="GO" id="GO:0044772">
    <property type="term" value="P:mitotic cell cycle phase transition"/>
    <property type="evidence" value="ECO:0007669"/>
    <property type="project" value="InterPro"/>
</dbReference>
<dbReference type="CDD" id="cd20567">
    <property type="entry name" value="CYCLIN_AtCycB-like_rpt1"/>
    <property type="match status" value="1"/>
</dbReference>
<dbReference type="CDD" id="cd20511">
    <property type="entry name" value="CYCLIN_AtCycB-like_rpt2"/>
    <property type="match status" value="1"/>
</dbReference>
<dbReference type="FunFam" id="1.10.472.10:FF:000032">
    <property type="entry name" value="G2/mitotic-specific cyclin-1"/>
    <property type="match status" value="1"/>
</dbReference>
<dbReference type="Gene3D" id="1.10.472.10">
    <property type="entry name" value="Cyclin-like"/>
    <property type="match status" value="2"/>
</dbReference>
<dbReference type="InterPro" id="IPR039361">
    <property type="entry name" value="Cyclin"/>
</dbReference>
<dbReference type="InterPro" id="IPR013763">
    <property type="entry name" value="Cyclin-like_dom"/>
</dbReference>
<dbReference type="InterPro" id="IPR036915">
    <property type="entry name" value="Cyclin-like_sf"/>
</dbReference>
<dbReference type="InterPro" id="IPR046965">
    <property type="entry name" value="Cyclin_A/B-like"/>
</dbReference>
<dbReference type="InterPro" id="IPR004367">
    <property type="entry name" value="Cyclin_C-dom"/>
</dbReference>
<dbReference type="InterPro" id="IPR006671">
    <property type="entry name" value="Cyclin_N"/>
</dbReference>
<dbReference type="InterPro" id="IPR048258">
    <property type="entry name" value="Cyclins_cyclin-box"/>
</dbReference>
<dbReference type="PANTHER" id="PTHR10177">
    <property type="entry name" value="CYCLINS"/>
    <property type="match status" value="1"/>
</dbReference>
<dbReference type="Pfam" id="PF02984">
    <property type="entry name" value="Cyclin_C"/>
    <property type="match status" value="1"/>
</dbReference>
<dbReference type="Pfam" id="PF00134">
    <property type="entry name" value="Cyclin_N"/>
    <property type="match status" value="1"/>
</dbReference>
<dbReference type="PIRSF" id="PIRSF001771">
    <property type="entry name" value="Cyclin_A_B_D_E"/>
    <property type="match status" value="1"/>
</dbReference>
<dbReference type="SMART" id="SM00385">
    <property type="entry name" value="CYCLIN"/>
    <property type="match status" value="2"/>
</dbReference>
<dbReference type="SMART" id="SM01332">
    <property type="entry name" value="Cyclin_C"/>
    <property type="match status" value="1"/>
</dbReference>
<dbReference type="SUPFAM" id="SSF47954">
    <property type="entry name" value="Cyclin-like"/>
    <property type="match status" value="2"/>
</dbReference>
<dbReference type="PROSITE" id="PS00292">
    <property type="entry name" value="CYCLINS"/>
    <property type="match status" value="1"/>
</dbReference>
<gene>
    <name type="primary">CYCB2-4</name>
    <name type="ordered locus">At1g76310</name>
    <name type="ORF">F15M4.19</name>
    <name type="ORF">T23E18.24</name>
</gene>
<comment type="subunit">
    <text evidence="2">Interacts with SMR11 (PubMed:20706207).</text>
</comment>
<comment type="similarity">
    <text evidence="3">Belongs to the cyclin family. Cyclin AB subfamily.</text>
</comment>
<comment type="sequence caution" evidence="3">
    <conflict type="erroneous gene model prediction">
        <sequence resource="EMBL-CDS" id="AAF16669"/>
    </conflict>
</comment>
<comment type="sequence caution" evidence="3">
    <conflict type="erroneous gene model prediction">
        <sequence resource="EMBL-CDS" id="AAF17635"/>
    </conflict>
</comment>
<proteinExistence type="evidence at transcript level"/>
<accession>Q9SFW6</accession>
<accession>Q9SGQ4</accession>
<keyword id="KW-0131">Cell cycle</keyword>
<keyword id="KW-0132">Cell division</keyword>
<keyword id="KW-0195">Cyclin</keyword>
<keyword id="KW-1185">Reference proteome</keyword>